<keyword id="KW-0240">DNA-directed RNA polymerase</keyword>
<keyword id="KW-0548">Nucleotidyltransferase</keyword>
<keyword id="KW-0804">Transcription</keyword>
<keyword id="KW-0808">Transferase</keyword>
<evidence type="ECO:0000255" key="1">
    <source>
        <dbReference type="HAMAP-Rule" id="MF_01321"/>
    </source>
</evidence>
<evidence type="ECO:0000256" key="2">
    <source>
        <dbReference type="SAM" id="MobiDB-lite"/>
    </source>
</evidence>
<organism>
    <name type="scientific">Lactobacillus gasseri (strain ATCC 33323 / DSM 20243 / BCRC 14619 / CIP 102991 / JCM 1131 / KCTC 3163 / NCIMB 11718 / NCTC 13722 / AM63)</name>
    <dbReference type="NCBI Taxonomy" id="324831"/>
    <lineage>
        <taxon>Bacteria</taxon>
        <taxon>Bacillati</taxon>
        <taxon>Bacillota</taxon>
        <taxon>Bacilli</taxon>
        <taxon>Lactobacillales</taxon>
        <taxon>Lactobacillaceae</taxon>
        <taxon>Lactobacillus</taxon>
    </lineage>
</organism>
<dbReference type="EC" id="2.7.7.6" evidence="1"/>
<dbReference type="EMBL" id="CP000413">
    <property type="protein sequence ID" value="ABJ59690.1"/>
    <property type="molecule type" value="Genomic_DNA"/>
</dbReference>
<dbReference type="RefSeq" id="WP_011678765.1">
    <property type="nucleotide sequence ID" value="NZ_WBMG01000001.1"/>
</dbReference>
<dbReference type="SMR" id="Q046D2"/>
<dbReference type="GeneID" id="29639881"/>
<dbReference type="KEGG" id="lga:LGAS_0284"/>
<dbReference type="HOGENOM" id="CLU_000524_4_1_9"/>
<dbReference type="BioCyc" id="LGAS324831:G1G6Y-282-MONOMER"/>
<dbReference type="Proteomes" id="UP000000664">
    <property type="component" value="Chromosome"/>
</dbReference>
<dbReference type="GO" id="GO:0000428">
    <property type="term" value="C:DNA-directed RNA polymerase complex"/>
    <property type="evidence" value="ECO:0007669"/>
    <property type="project" value="UniProtKB-KW"/>
</dbReference>
<dbReference type="GO" id="GO:0003677">
    <property type="term" value="F:DNA binding"/>
    <property type="evidence" value="ECO:0007669"/>
    <property type="project" value="UniProtKB-UniRule"/>
</dbReference>
<dbReference type="GO" id="GO:0003899">
    <property type="term" value="F:DNA-directed RNA polymerase activity"/>
    <property type="evidence" value="ECO:0007669"/>
    <property type="project" value="UniProtKB-UniRule"/>
</dbReference>
<dbReference type="GO" id="GO:0032549">
    <property type="term" value="F:ribonucleoside binding"/>
    <property type="evidence" value="ECO:0007669"/>
    <property type="project" value="InterPro"/>
</dbReference>
<dbReference type="GO" id="GO:0006351">
    <property type="term" value="P:DNA-templated transcription"/>
    <property type="evidence" value="ECO:0007669"/>
    <property type="project" value="UniProtKB-UniRule"/>
</dbReference>
<dbReference type="CDD" id="cd00653">
    <property type="entry name" value="RNA_pol_B_RPB2"/>
    <property type="match status" value="1"/>
</dbReference>
<dbReference type="FunFam" id="3.90.1800.10:FF:000001">
    <property type="entry name" value="DNA-directed RNA polymerase subunit beta"/>
    <property type="match status" value="1"/>
</dbReference>
<dbReference type="Gene3D" id="2.40.50.100">
    <property type="match status" value="1"/>
</dbReference>
<dbReference type="Gene3D" id="2.40.50.150">
    <property type="match status" value="1"/>
</dbReference>
<dbReference type="Gene3D" id="3.90.1100.10">
    <property type="match status" value="2"/>
</dbReference>
<dbReference type="Gene3D" id="2.30.150.10">
    <property type="entry name" value="DNA-directed RNA polymerase, beta subunit, external 1 domain"/>
    <property type="match status" value="1"/>
</dbReference>
<dbReference type="Gene3D" id="2.40.270.10">
    <property type="entry name" value="DNA-directed RNA polymerase, subunit 2, domain 6"/>
    <property type="match status" value="1"/>
</dbReference>
<dbReference type="Gene3D" id="3.90.1800.10">
    <property type="entry name" value="RNA polymerase alpha subunit dimerisation domain"/>
    <property type="match status" value="1"/>
</dbReference>
<dbReference type="Gene3D" id="3.90.1110.10">
    <property type="entry name" value="RNA polymerase Rpb2, domain 2"/>
    <property type="match status" value="1"/>
</dbReference>
<dbReference type="HAMAP" id="MF_01321">
    <property type="entry name" value="RNApol_bact_RpoB"/>
    <property type="match status" value="1"/>
</dbReference>
<dbReference type="InterPro" id="IPR042107">
    <property type="entry name" value="DNA-dir_RNA_pol_bsu_ext_1_sf"/>
</dbReference>
<dbReference type="InterPro" id="IPR019462">
    <property type="entry name" value="DNA-dir_RNA_pol_bsu_external_1"/>
</dbReference>
<dbReference type="InterPro" id="IPR015712">
    <property type="entry name" value="DNA-dir_RNA_pol_su2"/>
</dbReference>
<dbReference type="InterPro" id="IPR007120">
    <property type="entry name" value="DNA-dir_RNAP_su2_dom"/>
</dbReference>
<dbReference type="InterPro" id="IPR037033">
    <property type="entry name" value="DNA-dir_RNAP_su2_hyb_sf"/>
</dbReference>
<dbReference type="InterPro" id="IPR010243">
    <property type="entry name" value="RNA_pol_bsu_bac"/>
</dbReference>
<dbReference type="InterPro" id="IPR007121">
    <property type="entry name" value="RNA_pol_bsu_CS"/>
</dbReference>
<dbReference type="InterPro" id="IPR007644">
    <property type="entry name" value="RNA_pol_bsu_protrusion"/>
</dbReference>
<dbReference type="InterPro" id="IPR007642">
    <property type="entry name" value="RNA_pol_Rpb2_2"/>
</dbReference>
<dbReference type="InterPro" id="IPR037034">
    <property type="entry name" value="RNA_pol_Rpb2_2_sf"/>
</dbReference>
<dbReference type="InterPro" id="IPR007645">
    <property type="entry name" value="RNA_pol_Rpb2_3"/>
</dbReference>
<dbReference type="InterPro" id="IPR007641">
    <property type="entry name" value="RNA_pol_Rpb2_7"/>
</dbReference>
<dbReference type="InterPro" id="IPR014724">
    <property type="entry name" value="RNA_pol_RPB2_OB-fold"/>
</dbReference>
<dbReference type="NCBIfam" id="NF001616">
    <property type="entry name" value="PRK00405.1"/>
    <property type="match status" value="1"/>
</dbReference>
<dbReference type="NCBIfam" id="TIGR02013">
    <property type="entry name" value="rpoB"/>
    <property type="match status" value="1"/>
</dbReference>
<dbReference type="PANTHER" id="PTHR20856">
    <property type="entry name" value="DNA-DIRECTED RNA POLYMERASE I SUBUNIT 2"/>
    <property type="match status" value="1"/>
</dbReference>
<dbReference type="Pfam" id="PF04563">
    <property type="entry name" value="RNA_pol_Rpb2_1"/>
    <property type="match status" value="1"/>
</dbReference>
<dbReference type="Pfam" id="PF04561">
    <property type="entry name" value="RNA_pol_Rpb2_2"/>
    <property type="match status" value="2"/>
</dbReference>
<dbReference type="Pfam" id="PF04565">
    <property type="entry name" value="RNA_pol_Rpb2_3"/>
    <property type="match status" value="1"/>
</dbReference>
<dbReference type="Pfam" id="PF10385">
    <property type="entry name" value="RNA_pol_Rpb2_45"/>
    <property type="match status" value="1"/>
</dbReference>
<dbReference type="Pfam" id="PF00562">
    <property type="entry name" value="RNA_pol_Rpb2_6"/>
    <property type="match status" value="1"/>
</dbReference>
<dbReference type="Pfam" id="PF04560">
    <property type="entry name" value="RNA_pol_Rpb2_7"/>
    <property type="match status" value="1"/>
</dbReference>
<dbReference type="SUPFAM" id="SSF64484">
    <property type="entry name" value="beta and beta-prime subunits of DNA dependent RNA-polymerase"/>
    <property type="match status" value="1"/>
</dbReference>
<dbReference type="PROSITE" id="PS01166">
    <property type="entry name" value="RNA_POL_BETA"/>
    <property type="match status" value="1"/>
</dbReference>
<gene>
    <name evidence="1" type="primary">rpoB</name>
    <name type="ordered locus">LGAS_0284</name>
</gene>
<comment type="function">
    <text evidence="1">DNA-dependent RNA polymerase catalyzes the transcription of DNA into RNA using the four ribonucleoside triphosphates as substrates.</text>
</comment>
<comment type="catalytic activity">
    <reaction evidence="1">
        <text>RNA(n) + a ribonucleoside 5'-triphosphate = RNA(n+1) + diphosphate</text>
        <dbReference type="Rhea" id="RHEA:21248"/>
        <dbReference type="Rhea" id="RHEA-COMP:14527"/>
        <dbReference type="Rhea" id="RHEA-COMP:17342"/>
        <dbReference type="ChEBI" id="CHEBI:33019"/>
        <dbReference type="ChEBI" id="CHEBI:61557"/>
        <dbReference type="ChEBI" id="CHEBI:140395"/>
        <dbReference type="EC" id="2.7.7.6"/>
    </reaction>
</comment>
<comment type="subunit">
    <text evidence="1">The RNAP catalytic core consists of 2 alpha, 1 beta, 1 beta' and 1 omega subunit. When a sigma factor is associated with the core the holoenzyme is formed, which can initiate transcription.</text>
</comment>
<comment type="similarity">
    <text evidence="1">Belongs to the RNA polymerase beta chain family.</text>
</comment>
<sequence length="1212" mass="136060">MFSLLGHAVNYGSHRTRRSFSRIKEVLKLPNLTDVQTQSYKWFLNEGIREMFDDIMPISDFSGKLSLEFVDYKLLKPKYTLEEARDHDANYSAPLHVTLKLTNHETGEIKTQDVFFGEFPLMTDSGTFVINGAERIIVSQLVRSPGVYYHSDFDKNGRQIFGATVIPNRGAWLEYETDAKDLAYVRIDRTRKLPLTVLIRALGFGSDSEVADMFGESDSLRFTLEKDIHKNPADSRVAEALKDIYERLRPGEPKTTDSSRSLLYARFFDPRRYDLAPVGRYKINKKLSLKNRLLRQTLAETLADPDTGEIIAKKGDVVTHEILDKLSPYLDRDDFKMVTYEPSKEGVLPDPVTVQEIKVYSKVDPERVIKLMSNGHIADDVKHLTPADVLASINYFFNLQDNIGTTDDIDHLGNRRIRRVGELLQNQFRIGLARMERVVRERMSIQDISTVTPQQLINIRPVVASVKEFFGSSQLSQFMDQNNPLGELTHKRRMSALGPGGLSRDRAGYEVRDVHYTHYGRLCPIETPEGPNIGLINSLATYAIVNKYGFIETPYRRVSWDTHKVTDKIDYLTADVEDNYIIAGANAPLNEDGSFKDKIVLARHKEDNLEVTPDKIDYMDVIPKQVVSVTSACIPFLENDDSNRALMGANHQRQAVPLINPHAPIVGTGMEYRAAHDSGDALVAKAPGVVEYVDANEIRIRRDDDTLDKYVLEKFRRSNATKNYNQTPAVKQGERVVADEVIADGPAMENGELALGQNPIIAFLTWNMYNYEDAVMISERMVKDDVYTSIHIEDYESEARDTKLGPEEITREIPNVGEDALKDLDEEGIVRIGAEVQDGDILVGKVTPKGVTELSAEERLLHAIFGEKAREVRDTSLRVPHGGGGIVQNVQVFTREAGDELPPGVNKMVRVYIVQKRKIQVGDKMSGRHGNKGTIALVCPEEDMPYLPDGRPVDICLNPMGVPSRMNIGQVLELHLGIAAKQLGIHVATPVFDGASEDDMWNMVREAGIGKDGKTVLYDGRTGEPFHNRVSVGIMYYLKLTHMVDDKIHARSIGPYSLVTQQPLGGKAQFGGQRFGEMEVWALEAYGAAYTLQEILTYKSDDVVGRVKAYEAIVKGERIPKPGVPESFRVLVKELQSLGLDIKVLDMDHKEIELRDMDDDSNDHFNIDTLSKLAEQQEKKKLAEEAAKKDDKSAEPVDQSDSSTSSDDKVSK</sequence>
<reference key="1">
    <citation type="journal article" date="2006" name="Proc. Natl. Acad. Sci. U.S.A.">
        <title>Comparative genomics of the lactic acid bacteria.</title>
        <authorList>
            <person name="Makarova K.S."/>
            <person name="Slesarev A."/>
            <person name="Wolf Y.I."/>
            <person name="Sorokin A."/>
            <person name="Mirkin B."/>
            <person name="Koonin E.V."/>
            <person name="Pavlov A."/>
            <person name="Pavlova N."/>
            <person name="Karamychev V."/>
            <person name="Polouchine N."/>
            <person name="Shakhova V."/>
            <person name="Grigoriev I."/>
            <person name="Lou Y."/>
            <person name="Rohksar D."/>
            <person name="Lucas S."/>
            <person name="Huang K."/>
            <person name="Goodstein D.M."/>
            <person name="Hawkins T."/>
            <person name="Plengvidhya V."/>
            <person name="Welker D."/>
            <person name="Hughes J."/>
            <person name="Goh Y."/>
            <person name="Benson A."/>
            <person name="Baldwin K."/>
            <person name="Lee J.-H."/>
            <person name="Diaz-Muniz I."/>
            <person name="Dosti B."/>
            <person name="Smeianov V."/>
            <person name="Wechter W."/>
            <person name="Barabote R."/>
            <person name="Lorca G."/>
            <person name="Altermann E."/>
            <person name="Barrangou R."/>
            <person name="Ganesan B."/>
            <person name="Xie Y."/>
            <person name="Rawsthorne H."/>
            <person name="Tamir D."/>
            <person name="Parker C."/>
            <person name="Breidt F."/>
            <person name="Broadbent J.R."/>
            <person name="Hutkins R."/>
            <person name="O'Sullivan D."/>
            <person name="Steele J."/>
            <person name="Unlu G."/>
            <person name="Saier M.H. Jr."/>
            <person name="Klaenhammer T."/>
            <person name="Richardson P."/>
            <person name="Kozyavkin S."/>
            <person name="Weimer B.C."/>
            <person name="Mills D.A."/>
        </authorList>
    </citation>
    <scope>NUCLEOTIDE SEQUENCE [LARGE SCALE GENOMIC DNA]</scope>
    <source>
        <strain>ATCC 33323 / DSM 20243 / BCRC 14619 / CIP 102991 / JCM 1131 / KCTC 3163 / NCIMB 11718 / NCTC 13722 / AM63</strain>
    </source>
</reference>
<proteinExistence type="inferred from homology"/>
<name>RPOB_LACGA</name>
<accession>Q046D2</accession>
<protein>
    <recommendedName>
        <fullName evidence="1">DNA-directed RNA polymerase subunit beta</fullName>
        <shortName evidence="1">RNAP subunit beta</shortName>
        <ecNumber evidence="1">2.7.7.6</ecNumber>
    </recommendedName>
    <alternativeName>
        <fullName evidence="1">RNA polymerase subunit beta</fullName>
    </alternativeName>
    <alternativeName>
        <fullName evidence="1">Transcriptase subunit beta</fullName>
    </alternativeName>
</protein>
<feature type="chain" id="PRO_0000300333" description="DNA-directed RNA polymerase subunit beta">
    <location>
        <begin position="1"/>
        <end position="1212"/>
    </location>
</feature>
<feature type="region of interest" description="Disordered" evidence="2">
    <location>
        <begin position="1176"/>
        <end position="1212"/>
    </location>
</feature>
<feature type="compositionally biased region" description="Basic and acidic residues" evidence="2">
    <location>
        <begin position="1176"/>
        <end position="1195"/>
    </location>
</feature>